<proteinExistence type="inferred from homology"/>
<organism>
    <name type="scientific">Listeria monocytogenes serotype 4b (strain CLIP80459)</name>
    <dbReference type="NCBI Taxonomy" id="568819"/>
    <lineage>
        <taxon>Bacteria</taxon>
        <taxon>Bacillati</taxon>
        <taxon>Bacillota</taxon>
        <taxon>Bacilli</taxon>
        <taxon>Bacillales</taxon>
        <taxon>Listeriaceae</taxon>
        <taxon>Listeria</taxon>
    </lineage>
</organism>
<protein>
    <recommendedName>
        <fullName>UPF0754 membrane protein Lm4b_02251</fullName>
    </recommendedName>
</protein>
<feature type="chain" id="PRO_0000388298" description="UPF0754 membrane protein Lm4b_02251">
    <location>
        <begin position="1"/>
        <end position="377"/>
    </location>
</feature>
<feature type="transmembrane region" description="Helical" evidence="2">
    <location>
        <begin position="1"/>
        <end position="21"/>
    </location>
</feature>
<feature type="transmembrane region" description="Helical" evidence="2">
    <location>
        <begin position="357"/>
        <end position="377"/>
    </location>
</feature>
<keyword id="KW-1003">Cell membrane</keyword>
<keyword id="KW-0472">Membrane</keyword>
<keyword id="KW-0812">Transmembrane</keyword>
<keyword id="KW-1133">Transmembrane helix</keyword>
<name>Y2251_LISMC</name>
<comment type="subcellular location">
    <subcellularLocation>
        <location evidence="1">Cell membrane</location>
        <topology evidence="1">Multi-pass membrane protein</topology>
    </subcellularLocation>
</comment>
<comment type="similarity">
    <text evidence="3">Belongs to the UPF0754 family.</text>
</comment>
<reference key="1">
    <citation type="journal article" date="2012" name="BMC Genomics">
        <title>Comparative genomics and transcriptomics of lineages I, II, and III strains of Listeria monocytogenes.</title>
        <authorList>
            <person name="Hain T."/>
            <person name="Ghai R."/>
            <person name="Billion A."/>
            <person name="Kuenne C.T."/>
            <person name="Steinweg C."/>
            <person name="Izar B."/>
            <person name="Mohamed W."/>
            <person name="Mraheil M."/>
            <person name="Domann E."/>
            <person name="Schaffrath S."/>
            <person name="Karst U."/>
            <person name="Goesmann A."/>
            <person name="Oehm S."/>
            <person name="Puhler A."/>
            <person name="Merkl R."/>
            <person name="Vorwerk S."/>
            <person name="Glaser P."/>
            <person name="Garrido P."/>
            <person name="Rusniok C."/>
            <person name="Buchrieser C."/>
            <person name="Goebel W."/>
            <person name="Chakraborty T."/>
        </authorList>
    </citation>
    <scope>NUCLEOTIDE SEQUENCE [LARGE SCALE GENOMIC DNA]</scope>
    <source>
        <strain>CLIP80459</strain>
    </source>
</reference>
<accession>C1KXH9</accession>
<gene>
    <name type="ordered locus">Lm4b_02251</name>
</gene>
<sequence>MSVLFTILLMAVIGGFIGAMTNYIAIRMLFRPYKAIYLFNKRLPFTPGLIPKRRDELAEHIGKVVVSHLLTEDAIRARLLDENLQKEITDTITKMFHEKMQLETTPNELLHHFGYENAEIRSMTWVEKTLEKEINHFLTTKKTTKMSDLIPTMLESELTTKLPHVTERITSKMTLFVSSEEGKIQIKQMLQKFFEEHGKMGSMARMFINIDSFSEKIQQEGLKLIGQEDTKNLINQLLTTEWKNFEAKELQELIPTEKQAHLAGQLTSELIQTFPHEKLFNQPIQVMLRGYEAAITEKVIPFAVERMLDFVATHSAEIVERMDLAKLVETQIATFSLPEIEKLVVEISGRELKMITYLGGILGGFIGIIQGVLAMWI</sequence>
<dbReference type="EMBL" id="FM242711">
    <property type="protein sequence ID" value="CAS06008.1"/>
    <property type="molecule type" value="Genomic_DNA"/>
</dbReference>
<dbReference type="RefSeq" id="WP_003727831.1">
    <property type="nucleotide sequence ID" value="NC_012488.1"/>
</dbReference>
<dbReference type="SMR" id="C1KXH9"/>
<dbReference type="KEGG" id="lmc:Lm4b_02251"/>
<dbReference type="HOGENOM" id="CLU_042384_0_0_9"/>
<dbReference type="GO" id="GO:0005886">
    <property type="term" value="C:plasma membrane"/>
    <property type="evidence" value="ECO:0007669"/>
    <property type="project" value="UniProtKB-SubCell"/>
</dbReference>
<dbReference type="InterPro" id="IPR007383">
    <property type="entry name" value="DUF445"/>
</dbReference>
<dbReference type="InterPro" id="IPR016991">
    <property type="entry name" value="UCP032178"/>
</dbReference>
<dbReference type="PANTHER" id="PTHR35791">
    <property type="entry name" value="UPF0754 MEMBRANE PROTEIN YHEB"/>
    <property type="match status" value="1"/>
</dbReference>
<dbReference type="PANTHER" id="PTHR35791:SF1">
    <property type="entry name" value="UPF0754 MEMBRANE PROTEIN YHEB"/>
    <property type="match status" value="1"/>
</dbReference>
<dbReference type="Pfam" id="PF04286">
    <property type="entry name" value="DUF445"/>
    <property type="match status" value="1"/>
</dbReference>
<dbReference type="PIRSF" id="PIRSF032178">
    <property type="entry name" value="UCP032178"/>
    <property type="match status" value="1"/>
</dbReference>
<evidence type="ECO:0000250" key="1"/>
<evidence type="ECO:0000255" key="2"/>
<evidence type="ECO:0000305" key="3"/>